<evidence type="ECO:0000255" key="1">
    <source>
        <dbReference type="HAMAP-Rule" id="MF_00195"/>
    </source>
</evidence>
<evidence type="ECO:0000305" key="2"/>
<proteinExistence type="inferred from homology"/>
<protein>
    <recommendedName>
        <fullName evidence="1">GTPase Der</fullName>
    </recommendedName>
    <alternativeName>
        <fullName evidence="1">GTP-binding protein EngA</fullName>
    </alternativeName>
</protein>
<comment type="function">
    <text evidence="1">GTPase that plays an essential role in the late steps of ribosome biogenesis.</text>
</comment>
<comment type="subunit">
    <text evidence="1">Associates with the 50S ribosomal subunit.</text>
</comment>
<comment type="similarity">
    <text evidence="1">Belongs to the TRAFAC class TrmE-Era-EngA-EngB-Septin-like GTPase superfamily. EngA (Der) GTPase family.</text>
</comment>
<comment type="sequence caution" evidence="2">
    <conflict type="erroneous initiation">
        <sequence resource="EMBL-CDS" id="CAC31753"/>
    </conflict>
    <text>Extended N-terminus.</text>
</comment>
<keyword id="KW-0342">GTP-binding</keyword>
<keyword id="KW-0547">Nucleotide-binding</keyword>
<keyword id="KW-1185">Reference proteome</keyword>
<keyword id="KW-0677">Repeat</keyword>
<keyword id="KW-0690">Ribosome biogenesis</keyword>
<organism>
    <name type="scientific">Mycobacterium leprae (strain TN)</name>
    <dbReference type="NCBI Taxonomy" id="272631"/>
    <lineage>
        <taxon>Bacteria</taxon>
        <taxon>Bacillati</taxon>
        <taxon>Actinomycetota</taxon>
        <taxon>Actinomycetes</taxon>
        <taxon>Mycobacteriales</taxon>
        <taxon>Mycobacteriaceae</taxon>
        <taxon>Mycobacterium</taxon>
    </lineage>
</organism>
<name>DER_MYCLE</name>
<sequence>MSQDGTWSDESDWELDDSDLAEFGPVVAVVGRPNVGKSTLVNRILGRREAVVQDVPGVTRDRVSYDAMWTGRRFVVQDTGGWEPDAKGLKRLVAEQASVAMRTADAVILVVDVGVGATDADEAAARILLRSGKLVFLAANKVDGEKGESDASALWSLGLGEPHAISAMHGRGVADLLDKVLAALPNVAESTSLDGGLRRVALVGKPNVGKSSLLNKLAGDQRSVVHEAAGTTVDPVDSLIEMGGRVWRFVDTAGLRRKVGQASGHEFYASVRTHGAIDSAEVVIMLIDASEPLTGQDQRVLSMVIDAGRALVLAFNKWDLVDEDRCDLLEREIDRELVQVRWAQRVNISAKTGRAVQKLVPAMENSLASWDTRIATGPLNIWIKAVVAATPPPVRGGKQPRILFATQATARPPTFVLFTTGFLEACYRRFLERRLRETFGFEGSPIRINVRVREKRGLKRR</sequence>
<feature type="chain" id="PRO_0000179016" description="GTPase Der">
    <location>
        <begin position="1"/>
        <end position="461"/>
    </location>
</feature>
<feature type="domain" description="EngA-type G 1">
    <location>
        <begin position="25"/>
        <end position="188"/>
    </location>
</feature>
<feature type="domain" description="EngA-type G 2">
    <location>
        <begin position="198"/>
        <end position="371"/>
    </location>
</feature>
<feature type="domain" description="KH-like" evidence="1">
    <location>
        <begin position="372"/>
        <end position="454"/>
    </location>
</feature>
<feature type="binding site" evidence="1">
    <location>
        <begin position="31"/>
        <end position="38"/>
    </location>
    <ligand>
        <name>GTP</name>
        <dbReference type="ChEBI" id="CHEBI:37565"/>
        <label>1</label>
    </ligand>
</feature>
<feature type="binding site" evidence="1">
    <location>
        <begin position="78"/>
        <end position="82"/>
    </location>
    <ligand>
        <name>GTP</name>
        <dbReference type="ChEBI" id="CHEBI:37565"/>
        <label>1</label>
    </ligand>
</feature>
<feature type="binding site" evidence="1">
    <location>
        <begin position="140"/>
        <end position="143"/>
    </location>
    <ligand>
        <name>GTP</name>
        <dbReference type="ChEBI" id="CHEBI:37565"/>
        <label>1</label>
    </ligand>
</feature>
<feature type="binding site" evidence="1">
    <location>
        <begin position="204"/>
        <end position="211"/>
    </location>
    <ligand>
        <name>GTP</name>
        <dbReference type="ChEBI" id="CHEBI:37565"/>
        <label>2</label>
    </ligand>
</feature>
<feature type="binding site" evidence="1">
    <location>
        <begin position="251"/>
        <end position="255"/>
    </location>
    <ligand>
        <name>GTP</name>
        <dbReference type="ChEBI" id="CHEBI:37565"/>
        <label>2</label>
    </ligand>
</feature>
<feature type="binding site" evidence="1">
    <location>
        <begin position="316"/>
        <end position="319"/>
    </location>
    <ligand>
        <name>GTP</name>
        <dbReference type="ChEBI" id="CHEBI:37565"/>
        <label>2</label>
    </ligand>
</feature>
<accession>Q49884</accession>
<accession>O05666</accession>
<dbReference type="EMBL" id="U00021">
    <property type="protein sequence ID" value="AAA50911.1"/>
    <property type="molecule type" value="Genomic_DNA"/>
</dbReference>
<dbReference type="EMBL" id="AL583921">
    <property type="protein sequence ID" value="CAC31753.1"/>
    <property type="status" value="ALT_INIT"/>
    <property type="molecule type" value="Genomic_DNA"/>
</dbReference>
<dbReference type="EMBL" id="Z95117">
    <property type="protein sequence ID" value="CAB08278.1"/>
    <property type="molecule type" value="Genomic_DNA"/>
</dbReference>
<dbReference type="PIR" id="F87080">
    <property type="entry name" value="F87080"/>
</dbReference>
<dbReference type="PIR" id="S72953">
    <property type="entry name" value="S72953"/>
</dbReference>
<dbReference type="RefSeq" id="WP_041323845.1">
    <property type="nucleotide sequence ID" value="NC_002677.1"/>
</dbReference>
<dbReference type="SMR" id="Q49884"/>
<dbReference type="STRING" id="272631.gene:17575210"/>
<dbReference type="KEGG" id="mle:ML1372"/>
<dbReference type="Leproma" id="ML1372"/>
<dbReference type="eggNOG" id="COG1160">
    <property type="taxonomic scope" value="Bacteria"/>
</dbReference>
<dbReference type="HOGENOM" id="CLU_016077_6_2_11"/>
<dbReference type="Proteomes" id="UP000000806">
    <property type="component" value="Chromosome"/>
</dbReference>
<dbReference type="GO" id="GO:0005525">
    <property type="term" value="F:GTP binding"/>
    <property type="evidence" value="ECO:0007669"/>
    <property type="project" value="UniProtKB-UniRule"/>
</dbReference>
<dbReference type="GO" id="GO:0043022">
    <property type="term" value="F:ribosome binding"/>
    <property type="evidence" value="ECO:0007669"/>
    <property type="project" value="TreeGrafter"/>
</dbReference>
<dbReference type="GO" id="GO:0042254">
    <property type="term" value="P:ribosome biogenesis"/>
    <property type="evidence" value="ECO:0007669"/>
    <property type="project" value="UniProtKB-KW"/>
</dbReference>
<dbReference type="CDD" id="cd01894">
    <property type="entry name" value="EngA1"/>
    <property type="match status" value="1"/>
</dbReference>
<dbReference type="CDD" id="cd01895">
    <property type="entry name" value="EngA2"/>
    <property type="match status" value="1"/>
</dbReference>
<dbReference type="FunFam" id="3.30.300.20:FF:000004">
    <property type="entry name" value="GTPase Der"/>
    <property type="match status" value="1"/>
</dbReference>
<dbReference type="FunFam" id="3.40.50.300:FF:000040">
    <property type="entry name" value="GTPase Der"/>
    <property type="match status" value="1"/>
</dbReference>
<dbReference type="FunFam" id="3.40.50.300:FF:000057">
    <property type="entry name" value="GTPase Der"/>
    <property type="match status" value="1"/>
</dbReference>
<dbReference type="Gene3D" id="3.30.300.20">
    <property type="match status" value="1"/>
</dbReference>
<dbReference type="Gene3D" id="3.40.50.300">
    <property type="entry name" value="P-loop containing nucleotide triphosphate hydrolases"/>
    <property type="match status" value="2"/>
</dbReference>
<dbReference type="HAMAP" id="MF_00195">
    <property type="entry name" value="GTPase_Der"/>
    <property type="match status" value="1"/>
</dbReference>
<dbReference type="InterPro" id="IPR031166">
    <property type="entry name" value="G_ENGA"/>
</dbReference>
<dbReference type="InterPro" id="IPR006073">
    <property type="entry name" value="GTP-bd"/>
</dbReference>
<dbReference type="InterPro" id="IPR016484">
    <property type="entry name" value="GTPase_Der"/>
</dbReference>
<dbReference type="InterPro" id="IPR032859">
    <property type="entry name" value="KH_dom-like"/>
</dbReference>
<dbReference type="InterPro" id="IPR015946">
    <property type="entry name" value="KH_dom-like_a/b"/>
</dbReference>
<dbReference type="InterPro" id="IPR027417">
    <property type="entry name" value="P-loop_NTPase"/>
</dbReference>
<dbReference type="InterPro" id="IPR005225">
    <property type="entry name" value="Small_GTP-bd"/>
</dbReference>
<dbReference type="NCBIfam" id="TIGR03594">
    <property type="entry name" value="GTPase_EngA"/>
    <property type="match status" value="1"/>
</dbReference>
<dbReference type="NCBIfam" id="NF002828">
    <property type="entry name" value="PRK03003.1"/>
    <property type="match status" value="1"/>
</dbReference>
<dbReference type="NCBIfam" id="TIGR00231">
    <property type="entry name" value="small_GTP"/>
    <property type="match status" value="2"/>
</dbReference>
<dbReference type="PANTHER" id="PTHR43834">
    <property type="entry name" value="GTPASE DER"/>
    <property type="match status" value="1"/>
</dbReference>
<dbReference type="PANTHER" id="PTHR43834:SF6">
    <property type="entry name" value="GTPASE DER"/>
    <property type="match status" value="1"/>
</dbReference>
<dbReference type="Pfam" id="PF14714">
    <property type="entry name" value="KH_dom-like"/>
    <property type="match status" value="1"/>
</dbReference>
<dbReference type="Pfam" id="PF01926">
    <property type="entry name" value="MMR_HSR1"/>
    <property type="match status" value="2"/>
</dbReference>
<dbReference type="PIRSF" id="PIRSF006485">
    <property type="entry name" value="GTP-binding_EngA"/>
    <property type="match status" value="1"/>
</dbReference>
<dbReference type="PRINTS" id="PR00326">
    <property type="entry name" value="GTP1OBG"/>
</dbReference>
<dbReference type="SUPFAM" id="SSF52540">
    <property type="entry name" value="P-loop containing nucleoside triphosphate hydrolases"/>
    <property type="match status" value="2"/>
</dbReference>
<dbReference type="PROSITE" id="PS51712">
    <property type="entry name" value="G_ENGA"/>
    <property type="match status" value="2"/>
</dbReference>
<gene>
    <name evidence="1" type="primary">der</name>
    <name type="synonym">engA</name>
    <name type="ordered locus">ML1372</name>
    <name type="ORF">MLCB1351.01</name>
    <name type="ORF">u0247e</name>
</gene>
<reference key="1">
    <citation type="submission" date="1994-03" db="EMBL/GenBank/DDBJ databases">
        <authorList>
            <person name="Smith D.R."/>
            <person name="Robison K."/>
        </authorList>
    </citation>
    <scope>NUCLEOTIDE SEQUENCE [GENOMIC DNA]</scope>
</reference>
<reference key="2">
    <citation type="journal article" date="2001" name="Nature">
        <title>Massive gene decay in the leprosy bacillus.</title>
        <authorList>
            <person name="Cole S.T."/>
            <person name="Eiglmeier K."/>
            <person name="Parkhill J."/>
            <person name="James K.D."/>
            <person name="Thomson N.R."/>
            <person name="Wheeler P.R."/>
            <person name="Honore N."/>
            <person name="Garnier T."/>
            <person name="Churcher C.M."/>
            <person name="Harris D.E."/>
            <person name="Mungall K.L."/>
            <person name="Basham D."/>
            <person name="Brown D."/>
            <person name="Chillingworth T."/>
            <person name="Connor R."/>
            <person name="Davies R.M."/>
            <person name="Devlin K."/>
            <person name="Duthoy S."/>
            <person name="Feltwell T."/>
            <person name="Fraser A."/>
            <person name="Hamlin N."/>
            <person name="Holroyd S."/>
            <person name="Hornsby T."/>
            <person name="Jagels K."/>
            <person name="Lacroix C."/>
            <person name="Maclean J."/>
            <person name="Moule S."/>
            <person name="Murphy L.D."/>
            <person name="Oliver K."/>
            <person name="Quail M.A."/>
            <person name="Rajandream M.A."/>
            <person name="Rutherford K.M."/>
            <person name="Rutter S."/>
            <person name="Seeger K."/>
            <person name="Simon S."/>
            <person name="Simmonds M."/>
            <person name="Skelton J."/>
            <person name="Squares R."/>
            <person name="Squares S."/>
            <person name="Stevens K."/>
            <person name="Taylor K."/>
            <person name="Whitehead S."/>
            <person name="Woodward J.R."/>
            <person name="Barrell B.G."/>
        </authorList>
    </citation>
    <scope>NUCLEOTIDE SEQUENCE [LARGE SCALE GENOMIC DNA]</scope>
    <source>
        <strain>TN</strain>
    </source>
</reference>